<accession>Q8ZK71</accession>
<reference key="1">
    <citation type="journal article" date="2001" name="Nature">
        <title>Complete genome sequence of Salmonella enterica serovar Typhimurium LT2.</title>
        <authorList>
            <person name="McClelland M."/>
            <person name="Sanderson K.E."/>
            <person name="Spieth J."/>
            <person name="Clifton S.W."/>
            <person name="Latreille P."/>
            <person name="Courtney L."/>
            <person name="Porwollik S."/>
            <person name="Ali J."/>
            <person name="Dante M."/>
            <person name="Du F."/>
            <person name="Hou S."/>
            <person name="Layman D."/>
            <person name="Leonard S."/>
            <person name="Nguyen C."/>
            <person name="Scott K."/>
            <person name="Holmes A."/>
            <person name="Grewal N."/>
            <person name="Mulvaney E."/>
            <person name="Ryan E."/>
            <person name="Sun H."/>
            <person name="Florea L."/>
            <person name="Miller W."/>
            <person name="Stoneking T."/>
            <person name="Nhan M."/>
            <person name="Waterston R."/>
            <person name="Wilson R.K."/>
        </authorList>
    </citation>
    <scope>NUCLEOTIDE SEQUENCE [LARGE SCALE GENOMIC DNA]</scope>
    <source>
        <strain>LT2 / SGSC1412 / ATCC 700720</strain>
    </source>
</reference>
<dbReference type="EC" id="1.8.4.11" evidence="1"/>
<dbReference type="EMBL" id="AE006468">
    <property type="protein sequence ID" value="AAL23228.1"/>
    <property type="molecule type" value="Genomic_DNA"/>
</dbReference>
<dbReference type="RefSeq" id="NP_463269.1">
    <property type="nucleotide sequence ID" value="NC_003197.2"/>
</dbReference>
<dbReference type="RefSeq" id="WP_000051472.1">
    <property type="nucleotide sequence ID" value="NC_003197.2"/>
</dbReference>
<dbReference type="SMR" id="Q8ZK71"/>
<dbReference type="STRING" id="99287.STM4408"/>
<dbReference type="PaxDb" id="99287-STM4408"/>
<dbReference type="GeneID" id="1255934"/>
<dbReference type="KEGG" id="stm:STM4408"/>
<dbReference type="PATRIC" id="fig|99287.12.peg.4634"/>
<dbReference type="HOGENOM" id="CLU_031040_10_3_6"/>
<dbReference type="OMA" id="LFWESHD"/>
<dbReference type="PhylomeDB" id="Q8ZK71"/>
<dbReference type="BioCyc" id="SENT99287:STM4408-MONOMER"/>
<dbReference type="Proteomes" id="UP000001014">
    <property type="component" value="Chromosome"/>
</dbReference>
<dbReference type="GO" id="GO:0005737">
    <property type="term" value="C:cytoplasm"/>
    <property type="evidence" value="ECO:0000318"/>
    <property type="project" value="GO_Central"/>
</dbReference>
<dbReference type="GO" id="GO:0036456">
    <property type="term" value="F:L-methionine-(S)-S-oxide reductase activity"/>
    <property type="evidence" value="ECO:0000318"/>
    <property type="project" value="GO_Central"/>
</dbReference>
<dbReference type="GO" id="GO:0008113">
    <property type="term" value="F:peptide-methionine (S)-S-oxide reductase activity"/>
    <property type="evidence" value="ECO:0000318"/>
    <property type="project" value="GO_Central"/>
</dbReference>
<dbReference type="GO" id="GO:0034599">
    <property type="term" value="P:cellular response to oxidative stress"/>
    <property type="evidence" value="ECO:0000318"/>
    <property type="project" value="GO_Central"/>
</dbReference>
<dbReference type="GO" id="GO:0036211">
    <property type="term" value="P:protein modification process"/>
    <property type="evidence" value="ECO:0007669"/>
    <property type="project" value="UniProtKB-UniRule"/>
</dbReference>
<dbReference type="FunFam" id="3.30.1060.10:FF:000001">
    <property type="entry name" value="Peptide methionine sulfoxide reductase MsrA"/>
    <property type="match status" value="1"/>
</dbReference>
<dbReference type="Gene3D" id="3.30.1060.10">
    <property type="entry name" value="Peptide methionine sulphoxide reductase MsrA"/>
    <property type="match status" value="1"/>
</dbReference>
<dbReference type="HAMAP" id="MF_01401">
    <property type="entry name" value="MsrA"/>
    <property type="match status" value="1"/>
</dbReference>
<dbReference type="InterPro" id="IPR002569">
    <property type="entry name" value="Met_Sox_Rdtase_MsrA_dom"/>
</dbReference>
<dbReference type="InterPro" id="IPR036509">
    <property type="entry name" value="Met_Sox_Rdtase_MsrA_sf"/>
</dbReference>
<dbReference type="InterPro" id="IPR050162">
    <property type="entry name" value="MsrA_MetSO_reductase"/>
</dbReference>
<dbReference type="NCBIfam" id="TIGR00401">
    <property type="entry name" value="msrA"/>
    <property type="match status" value="1"/>
</dbReference>
<dbReference type="PANTHER" id="PTHR42799">
    <property type="entry name" value="MITOCHONDRIAL PEPTIDE METHIONINE SULFOXIDE REDUCTASE"/>
    <property type="match status" value="1"/>
</dbReference>
<dbReference type="PANTHER" id="PTHR42799:SF2">
    <property type="entry name" value="MITOCHONDRIAL PEPTIDE METHIONINE SULFOXIDE REDUCTASE"/>
    <property type="match status" value="1"/>
</dbReference>
<dbReference type="Pfam" id="PF01625">
    <property type="entry name" value="PMSR"/>
    <property type="match status" value="1"/>
</dbReference>
<dbReference type="SUPFAM" id="SSF55068">
    <property type="entry name" value="Peptide methionine sulfoxide reductase"/>
    <property type="match status" value="1"/>
</dbReference>
<protein>
    <recommendedName>
        <fullName evidence="1">Peptide methionine sulfoxide reductase MsrA</fullName>
        <shortName evidence="1">Protein-methionine-S-oxide reductase</shortName>
        <ecNumber evidence="1">1.8.4.11</ecNumber>
    </recommendedName>
    <alternativeName>
        <fullName evidence="1">Peptide-methionine (S)-S-oxide reductase</fullName>
        <shortName evidence="1">Peptide Met(O) reductase</shortName>
    </alternativeName>
</protein>
<proteinExistence type="inferred from homology"/>
<feature type="chain" id="PRO_0000138578" description="Peptide methionine sulfoxide reductase MsrA">
    <location>
        <begin position="1"/>
        <end position="212"/>
    </location>
</feature>
<feature type="active site" evidence="1">
    <location>
        <position position="52"/>
    </location>
</feature>
<sequence>MSLFDKKHLVTQADALPGRNTPMPIATLHAVNEHSMTNVPAGMEIAYFAMGCFWGVERLFWQLPGVYSTAAGYAGGYTPNPTYREVCSGQTGHAEAVRIVYDPAVISYEQLLQTFWENHDPTQGMQQGNDHGTQYRSAIYPLTPEQNAAAHASRERFQSAMTAAGDHRPITTEIAHATPFYYAEDEHQQYLHKNPYGYCGIGGIGVCLPPDA</sequence>
<organism>
    <name type="scientific">Salmonella typhimurium (strain LT2 / SGSC1412 / ATCC 700720)</name>
    <dbReference type="NCBI Taxonomy" id="99287"/>
    <lineage>
        <taxon>Bacteria</taxon>
        <taxon>Pseudomonadati</taxon>
        <taxon>Pseudomonadota</taxon>
        <taxon>Gammaproteobacteria</taxon>
        <taxon>Enterobacterales</taxon>
        <taxon>Enterobacteriaceae</taxon>
        <taxon>Salmonella</taxon>
    </lineage>
</organism>
<keyword id="KW-0560">Oxidoreductase</keyword>
<keyword id="KW-1185">Reference proteome</keyword>
<name>MSRA_SALTY</name>
<gene>
    <name evidence="1" type="primary">msrA</name>
    <name type="ordered locus">STM4408</name>
</gene>
<evidence type="ECO:0000255" key="1">
    <source>
        <dbReference type="HAMAP-Rule" id="MF_01401"/>
    </source>
</evidence>
<comment type="function">
    <text evidence="1">Has an important function as a repair enzyme for proteins that have been inactivated by oxidation. Catalyzes the reversible oxidation-reduction of methionine sulfoxide in proteins to methionine.</text>
</comment>
<comment type="catalytic activity">
    <reaction evidence="1">
        <text>L-methionyl-[protein] + [thioredoxin]-disulfide + H2O = L-methionyl-(S)-S-oxide-[protein] + [thioredoxin]-dithiol</text>
        <dbReference type="Rhea" id="RHEA:14217"/>
        <dbReference type="Rhea" id="RHEA-COMP:10698"/>
        <dbReference type="Rhea" id="RHEA-COMP:10700"/>
        <dbReference type="Rhea" id="RHEA-COMP:12313"/>
        <dbReference type="Rhea" id="RHEA-COMP:12315"/>
        <dbReference type="ChEBI" id="CHEBI:15377"/>
        <dbReference type="ChEBI" id="CHEBI:16044"/>
        <dbReference type="ChEBI" id="CHEBI:29950"/>
        <dbReference type="ChEBI" id="CHEBI:44120"/>
        <dbReference type="ChEBI" id="CHEBI:50058"/>
        <dbReference type="EC" id="1.8.4.11"/>
    </reaction>
</comment>
<comment type="catalytic activity">
    <reaction evidence="1">
        <text>[thioredoxin]-disulfide + L-methionine + H2O = L-methionine (S)-S-oxide + [thioredoxin]-dithiol</text>
        <dbReference type="Rhea" id="RHEA:19993"/>
        <dbReference type="Rhea" id="RHEA-COMP:10698"/>
        <dbReference type="Rhea" id="RHEA-COMP:10700"/>
        <dbReference type="ChEBI" id="CHEBI:15377"/>
        <dbReference type="ChEBI" id="CHEBI:29950"/>
        <dbReference type="ChEBI" id="CHEBI:50058"/>
        <dbReference type="ChEBI" id="CHEBI:57844"/>
        <dbReference type="ChEBI" id="CHEBI:58772"/>
        <dbReference type="EC" id="1.8.4.11"/>
    </reaction>
</comment>
<comment type="similarity">
    <text evidence="1">Belongs to the MsrA Met sulfoxide reductase family.</text>
</comment>